<gene>
    <name evidence="1" type="primary">mobA</name>
    <name type="synonym">mob</name>
    <name type="ordered locus">HI_0844</name>
</gene>
<feature type="chain" id="PRO_0000134891" description="Molybdenum cofactor guanylyltransferase">
    <location>
        <begin position="1"/>
        <end position="192"/>
    </location>
</feature>
<feature type="binding site" evidence="1">
    <location>
        <begin position="10"/>
        <end position="12"/>
    </location>
    <ligand>
        <name>GTP</name>
        <dbReference type="ChEBI" id="CHEBI:37565"/>
    </ligand>
</feature>
<feature type="binding site" evidence="1">
    <location>
        <position position="23"/>
    </location>
    <ligand>
        <name>GTP</name>
        <dbReference type="ChEBI" id="CHEBI:37565"/>
    </ligand>
</feature>
<feature type="binding site" evidence="1">
    <location>
        <position position="51"/>
    </location>
    <ligand>
        <name>GTP</name>
        <dbReference type="ChEBI" id="CHEBI:37565"/>
    </ligand>
</feature>
<feature type="binding site" evidence="1">
    <location>
        <position position="69"/>
    </location>
    <ligand>
        <name>GTP</name>
        <dbReference type="ChEBI" id="CHEBI:37565"/>
    </ligand>
</feature>
<feature type="binding site" evidence="1">
    <location>
        <position position="99"/>
    </location>
    <ligand>
        <name>GTP</name>
        <dbReference type="ChEBI" id="CHEBI:37565"/>
    </ligand>
</feature>
<feature type="binding site" evidence="1">
    <location>
        <position position="99"/>
    </location>
    <ligand>
        <name>Mg(2+)</name>
        <dbReference type="ChEBI" id="CHEBI:18420"/>
    </ligand>
</feature>
<protein>
    <recommendedName>
        <fullName evidence="1">Molybdenum cofactor guanylyltransferase</fullName>
        <shortName evidence="1">MoCo guanylyltransferase</shortName>
        <ecNumber evidence="1">2.7.7.77</ecNumber>
    </recommendedName>
    <alternativeName>
        <fullName evidence="1">GTP:molybdopterin guanylyltransferase</fullName>
    </alternativeName>
    <alternativeName>
        <fullName evidence="1">Mo-MPT guanylyltransferase</fullName>
    </alternativeName>
    <alternativeName>
        <fullName evidence="1">Molybdopterin guanylyltransferase</fullName>
    </alternativeName>
    <alternativeName>
        <fullName evidence="1">Molybdopterin-guanine dinucleotide synthase</fullName>
        <shortName evidence="1">MGD synthase</shortName>
    </alternativeName>
</protein>
<comment type="function">
    <text evidence="1">Transfers a GMP moiety from GTP to Mo-molybdopterin (Mo-MPT) cofactor (Moco or molybdenum cofactor) to form Mo-molybdopterin guanine dinucleotide (Mo-MGD) cofactor.</text>
</comment>
<comment type="catalytic activity">
    <reaction evidence="1">
        <text>Mo-molybdopterin + GTP + H(+) = Mo-molybdopterin guanine dinucleotide + diphosphate</text>
        <dbReference type="Rhea" id="RHEA:34243"/>
        <dbReference type="ChEBI" id="CHEBI:15378"/>
        <dbReference type="ChEBI" id="CHEBI:33019"/>
        <dbReference type="ChEBI" id="CHEBI:37565"/>
        <dbReference type="ChEBI" id="CHEBI:71302"/>
        <dbReference type="ChEBI" id="CHEBI:71310"/>
        <dbReference type="EC" id="2.7.7.77"/>
    </reaction>
</comment>
<comment type="cofactor">
    <cofactor evidence="1">
        <name>Mg(2+)</name>
        <dbReference type="ChEBI" id="CHEBI:18420"/>
    </cofactor>
</comment>
<comment type="subunit">
    <text evidence="1">Monomer.</text>
</comment>
<comment type="subcellular location">
    <subcellularLocation>
        <location evidence="1">Cytoplasm</location>
    </subcellularLocation>
</comment>
<comment type="domain">
    <text evidence="1">The N-terminal domain determines nucleotide recognition and specific binding, while the C-terminal domain determines the specific binding to the target protein.</text>
</comment>
<comment type="similarity">
    <text evidence="1">Belongs to the MobA family.</text>
</comment>
<keyword id="KW-0963">Cytoplasm</keyword>
<keyword id="KW-0342">GTP-binding</keyword>
<keyword id="KW-0460">Magnesium</keyword>
<keyword id="KW-0479">Metal-binding</keyword>
<keyword id="KW-0501">Molybdenum cofactor biosynthesis</keyword>
<keyword id="KW-0547">Nucleotide-binding</keyword>
<keyword id="KW-1185">Reference proteome</keyword>
<keyword id="KW-0808">Transferase</keyword>
<organism>
    <name type="scientific">Haemophilus influenzae (strain ATCC 51907 / DSM 11121 / KW20 / Rd)</name>
    <dbReference type="NCBI Taxonomy" id="71421"/>
    <lineage>
        <taxon>Bacteria</taxon>
        <taxon>Pseudomonadati</taxon>
        <taxon>Pseudomonadota</taxon>
        <taxon>Gammaproteobacteria</taxon>
        <taxon>Pasteurellales</taxon>
        <taxon>Pasteurellaceae</taxon>
        <taxon>Haemophilus</taxon>
    </lineage>
</organism>
<name>MOBA_HAEIN</name>
<reference key="1">
    <citation type="journal article" date="1995" name="Science">
        <title>Whole-genome random sequencing and assembly of Haemophilus influenzae Rd.</title>
        <authorList>
            <person name="Fleischmann R.D."/>
            <person name="Adams M.D."/>
            <person name="White O."/>
            <person name="Clayton R.A."/>
            <person name="Kirkness E.F."/>
            <person name="Kerlavage A.R."/>
            <person name="Bult C.J."/>
            <person name="Tomb J.-F."/>
            <person name="Dougherty B.A."/>
            <person name="Merrick J.M."/>
            <person name="McKenney K."/>
            <person name="Sutton G.G."/>
            <person name="FitzHugh W."/>
            <person name="Fields C.A."/>
            <person name="Gocayne J.D."/>
            <person name="Scott J.D."/>
            <person name="Shirley R."/>
            <person name="Liu L.-I."/>
            <person name="Glodek A."/>
            <person name="Kelley J.M."/>
            <person name="Weidman J.F."/>
            <person name="Phillips C.A."/>
            <person name="Spriggs T."/>
            <person name="Hedblom E."/>
            <person name="Cotton M.D."/>
            <person name="Utterback T.R."/>
            <person name="Hanna M.C."/>
            <person name="Nguyen D.T."/>
            <person name="Saudek D.M."/>
            <person name="Brandon R.C."/>
            <person name="Fine L.D."/>
            <person name="Fritchman J.L."/>
            <person name="Fuhrmann J.L."/>
            <person name="Geoghagen N.S.M."/>
            <person name="Gnehm C.L."/>
            <person name="McDonald L.A."/>
            <person name="Small K.V."/>
            <person name="Fraser C.M."/>
            <person name="Smith H.O."/>
            <person name="Venter J.C."/>
        </authorList>
    </citation>
    <scope>NUCLEOTIDE SEQUENCE [LARGE SCALE GENOMIC DNA]</scope>
    <source>
        <strain>ATCC 51907 / DSM 11121 / KW20 / Rd</strain>
    </source>
</reference>
<sequence length="192" mass="21754">MTITISAVILAGGKARRMGGQDKGLQILGKQSLIEHIINRLQPQIHQISINANRNQTEYAKFGFPVFSDELPDFQGPLSGMLTALEKTKSDFILFTPCDTPFFPMNLLDKLKSAVKNDRTLIAYACDEEREHPVFCLMSVQLKEKLRHYLASGERRLLQFMKENGGISVKFTQEEGNFENFNTLDDLKKTVI</sequence>
<dbReference type="EC" id="2.7.7.77" evidence="1"/>
<dbReference type="EMBL" id="L42023">
    <property type="protein sequence ID" value="AAC22501.1"/>
    <property type="molecule type" value="Genomic_DNA"/>
</dbReference>
<dbReference type="PIR" id="A64098">
    <property type="entry name" value="A64098"/>
</dbReference>
<dbReference type="RefSeq" id="NP_439004.1">
    <property type="nucleotide sequence ID" value="NC_000907.1"/>
</dbReference>
<dbReference type="SMR" id="P44899"/>
<dbReference type="STRING" id="71421.HI_0844"/>
<dbReference type="EnsemblBacteria" id="AAC22501">
    <property type="protein sequence ID" value="AAC22501"/>
    <property type="gene ID" value="HI_0844"/>
</dbReference>
<dbReference type="KEGG" id="hin:HI_0844"/>
<dbReference type="PATRIC" id="fig|71421.8.peg.885"/>
<dbReference type="eggNOG" id="COG0746">
    <property type="taxonomic scope" value="Bacteria"/>
</dbReference>
<dbReference type="HOGENOM" id="CLU_055597_5_1_6"/>
<dbReference type="OrthoDB" id="9788394at2"/>
<dbReference type="PhylomeDB" id="P44899"/>
<dbReference type="BioCyc" id="HINF71421:G1GJ1-884-MONOMER"/>
<dbReference type="Proteomes" id="UP000000579">
    <property type="component" value="Chromosome"/>
</dbReference>
<dbReference type="GO" id="GO:0005737">
    <property type="term" value="C:cytoplasm"/>
    <property type="evidence" value="ECO:0007669"/>
    <property type="project" value="UniProtKB-SubCell"/>
</dbReference>
<dbReference type="GO" id="GO:0005525">
    <property type="term" value="F:GTP binding"/>
    <property type="evidence" value="ECO:0007669"/>
    <property type="project" value="UniProtKB-UniRule"/>
</dbReference>
<dbReference type="GO" id="GO:0046872">
    <property type="term" value="F:metal ion binding"/>
    <property type="evidence" value="ECO:0007669"/>
    <property type="project" value="UniProtKB-KW"/>
</dbReference>
<dbReference type="GO" id="GO:0061603">
    <property type="term" value="F:molybdenum cofactor guanylyltransferase activity"/>
    <property type="evidence" value="ECO:0007669"/>
    <property type="project" value="UniProtKB-EC"/>
</dbReference>
<dbReference type="GO" id="GO:0016779">
    <property type="term" value="F:nucleotidyltransferase activity"/>
    <property type="evidence" value="ECO:0000318"/>
    <property type="project" value="GO_Central"/>
</dbReference>
<dbReference type="GO" id="GO:1902758">
    <property type="term" value="P:bis(molybdopterin guanine dinucleotide)molybdenum biosynthetic process"/>
    <property type="evidence" value="ECO:0000318"/>
    <property type="project" value="GO_Central"/>
</dbReference>
<dbReference type="CDD" id="cd02503">
    <property type="entry name" value="MobA"/>
    <property type="match status" value="1"/>
</dbReference>
<dbReference type="Gene3D" id="3.90.550.10">
    <property type="entry name" value="Spore Coat Polysaccharide Biosynthesis Protein SpsA, Chain A"/>
    <property type="match status" value="1"/>
</dbReference>
<dbReference type="HAMAP" id="MF_00316">
    <property type="entry name" value="MobA"/>
    <property type="match status" value="1"/>
</dbReference>
<dbReference type="InterPro" id="IPR025877">
    <property type="entry name" value="MobA-like_NTP_Trfase"/>
</dbReference>
<dbReference type="InterPro" id="IPR013482">
    <property type="entry name" value="Molybde_CF_guanTrfase"/>
</dbReference>
<dbReference type="InterPro" id="IPR029044">
    <property type="entry name" value="Nucleotide-diphossugar_trans"/>
</dbReference>
<dbReference type="NCBIfam" id="TIGR02665">
    <property type="entry name" value="molyb_mobA"/>
    <property type="match status" value="1"/>
</dbReference>
<dbReference type="PANTHER" id="PTHR19136">
    <property type="entry name" value="MOLYBDENUM COFACTOR GUANYLYLTRANSFERASE"/>
    <property type="match status" value="1"/>
</dbReference>
<dbReference type="PANTHER" id="PTHR19136:SF81">
    <property type="entry name" value="MOLYBDENUM COFACTOR GUANYLYLTRANSFERASE"/>
    <property type="match status" value="1"/>
</dbReference>
<dbReference type="Pfam" id="PF12804">
    <property type="entry name" value="NTP_transf_3"/>
    <property type="match status" value="1"/>
</dbReference>
<dbReference type="SUPFAM" id="SSF53448">
    <property type="entry name" value="Nucleotide-diphospho-sugar transferases"/>
    <property type="match status" value="1"/>
</dbReference>
<accession>P44899</accession>
<proteinExistence type="inferred from homology"/>
<evidence type="ECO:0000255" key="1">
    <source>
        <dbReference type="HAMAP-Rule" id="MF_00316"/>
    </source>
</evidence>